<sequence length="622" mass="67909">MNLCSSSGATASNTSLSSTGHPESNGSGPSEATHCFGGGGGGGGNNAGGGSGTDTAPNSNKGTLNGGGSGGGGGANPASSNGHSLTHNNENNGNMPPETRPKMVTVKHPESNKPKPTTKKIVKNIQADQDVIKALQRCRDEGIKRLDLSKSSITVLPNTVRECVHLTELYLYSNKIGQLPTEIGCLVNLRNLALNENSLTSLPESLKHCTQLKVLDLRHNKLAEIPSVIYRLRSLTTLYLRFNRITTVADDLRQLVNLTMLSLRENKIKELGSAIGALVNLTTLDVSHNHLEHLPEDIGNCVNLSALDLQHNELLDIPDSIGNLKSLVRLGLRYNRLNCVPVSLKNCKSMDEFNVEGNGITQLPDGMLASLSALTSITLSRNQFTSYPTGGPAQFTNVYSINLEHNRIDKIPYGIFSRAKGLTKLNMKENMLTALPLDVGTWVNMVELNLATNALQKLPDDIMNLQNLEILILSNNMLKKIPNTIGNLRKLRILDLEENRIEVLPHEIGLLHELQRLILQTNQITMLPRSVGHLSNLTHLSVSENNLQFLPEEIGSLESLENLYINQNPGLEKLPFELALCQNLKYLNIDKCPLGTIPPEIQAGGPSLVLQWLKMHSPYRQM</sequence>
<dbReference type="EMBL" id="CH916374">
    <property type="protein sequence ID" value="EDV91538.1"/>
    <property type="molecule type" value="Genomic_DNA"/>
</dbReference>
<dbReference type="SMR" id="B4JTV9"/>
<dbReference type="FunCoup" id="B4JTV9">
    <property type="interactions" value="2065"/>
</dbReference>
<dbReference type="STRING" id="7222.B4JTV9"/>
<dbReference type="EnsemblMetazoa" id="FBtr0152910">
    <property type="protein sequence ID" value="FBpp0151402"/>
    <property type="gene ID" value="FBgn0124966"/>
</dbReference>
<dbReference type="EnsemblMetazoa" id="XM_001994873.3">
    <property type="protein sequence ID" value="XP_001994909.1"/>
    <property type="gene ID" value="LOC6568108"/>
</dbReference>
<dbReference type="EnsemblMetazoa" id="XM_032740513.2">
    <property type="protein sequence ID" value="XP_032596404.1"/>
    <property type="gene ID" value="LOC6568108"/>
</dbReference>
<dbReference type="GeneID" id="6568108"/>
<dbReference type="KEGG" id="dgr:6568108"/>
<dbReference type="CTD" id="42093"/>
<dbReference type="eggNOG" id="KOG0619">
    <property type="taxonomic scope" value="Eukaryota"/>
</dbReference>
<dbReference type="HOGENOM" id="CLU_000288_18_23_1"/>
<dbReference type="InParanoid" id="B4JTV9"/>
<dbReference type="OMA" id="NQFTSYP"/>
<dbReference type="OrthoDB" id="676979at2759"/>
<dbReference type="PhylomeDB" id="B4JTV9"/>
<dbReference type="ChiTaRS" id="Sur-8">
    <property type="organism name" value="fly"/>
</dbReference>
<dbReference type="Proteomes" id="UP000001070">
    <property type="component" value="Unassembled WGS sequence"/>
</dbReference>
<dbReference type="GO" id="GO:0005737">
    <property type="term" value="C:cytoplasm"/>
    <property type="evidence" value="ECO:0007669"/>
    <property type="project" value="TreeGrafter"/>
</dbReference>
<dbReference type="FunFam" id="3.80.10.10:FF:000031">
    <property type="entry name" value="leucine-rich repeat protein SHOC-2"/>
    <property type="match status" value="1"/>
</dbReference>
<dbReference type="FunFam" id="3.80.10.10:FF:000115">
    <property type="entry name" value="leucine-rich repeat protein SHOC-2"/>
    <property type="match status" value="1"/>
</dbReference>
<dbReference type="FunFam" id="3.80.10.10:FF:000281">
    <property type="entry name" value="Leucine-rich repeat protein soc-2"/>
    <property type="match status" value="1"/>
</dbReference>
<dbReference type="FunFam" id="3.80.10.10:FF:000450">
    <property type="entry name" value="Leucine-rich repeat protein soc-2"/>
    <property type="match status" value="1"/>
</dbReference>
<dbReference type="Gene3D" id="3.80.10.10">
    <property type="entry name" value="Ribonuclease Inhibitor"/>
    <property type="match status" value="5"/>
</dbReference>
<dbReference type="InterPro" id="IPR001611">
    <property type="entry name" value="Leu-rich_rpt"/>
</dbReference>
<dbReference type="InterPro" id="IPR003591">
    <property type="entry name" value="Leu-rich_rpt_typical-subtyp"/>
</dbReference>
<dbReference type="InterPro" id="IPR032675">
    <property type="entry name" value="LRR_dom_sf"/>
</dbReference>
<dbReference type="InterPro" id="IPR050216">
    <property type="entry name" value="LRR_domain-containing"/>
</dbReference>
<dbReference type="InterPro" id="IPR055414">
    <property type="entry name" value="LRR_R13L4/SHOC2-like"/>
</dbReference>
<dbReference type="PANTHER" id="PTHR48051">
    <property type="match status" value="1"/>
</dbReference>
<dbReference type="PANTHER" id="PTHR48051:SF1">
    <property type="entry name" value="RAS SUPPRESSOR PROTEIN 1"/>
    <property type="match status" value="1"/>
</dbReference>
<dbReference type="Pfam" id="PF00560">
    <property type="entry name" value="LRR_1"/>
    <property type="match status" value="1"/>
</dbReference>
<dbReference type="Pfam" id="PF23598">
    <property type="entry name" value="LRR_14"/>
    <property type="match status" value="2"/>
</dbReference>
<dbReference type="Pfam" id="PF13855">
    <property type="entry name" value="LRR_8"/>
    <property type="match status" value="1"/>
</dbReference>
<dbReference type="SMART" id="SM00364">
    <property type="entry name" value="LRR_BAC"/>
    <property type="match status" value="12"/>
</dbReference>
<dbReference type="SMART" id="SM00365">
    <property type="entry name" value="LRR_SD22"/>
    <property type="match status" value="8"/>
</dbReference>
<dbReference type="SMART" id="SM00369">
    <property type="entry name" value="LRR_TYP"/>
    <property type="match status" value="15"/>
</dbReference>
<dbReference type="SUPFAM" id="SSF52058">
    <property type="entry name" value="L domain-like"/>
    <property type="match status" value="2"/>
</dbReference>
<dbReference type="PROSITE" id="PS51450">
    <property type="entry name" value="LRR"/>
    <property type="match status" value="18"/>
</dbReference>
<proteinExistence type="inferred from homology"/>
<reference key="1">
    <citation type="journal article" date="2007" name="Nature">
        <title>Evolution of genes and genomes on the Drosophila phylogeny.</title>
        <authorList>
            <consortium name="Drosophila 12 genomes consortium"/>
        </authorList>
    </citation>
    <scope>NUCLEOTIDE SEQUENCE [LARGE SCALE GENOMIC DNA]</scope>
    <source>
        <strain>Tucson 15287-2541.00</strain>
    </source>
</reference>
<organism>
    <name type="scientific">Drosophila grimshawi</name>
    <name type="common">Hawaiian fruit fly</name>
    <name type="synonym">Idiomyia grimshawi</name>
    <dbReference type="NCBI Taxonomy" id="7222"/>
    <lineage>
        <taxon>Eukaryota</taxon>
        <taxon>Metazoa</taxon>
        <taxon>Ecdysozoa</taxon>
        <taxon>Arthropoda</taxon>
        <taxon>Hexapoda</taxon>
        <taxon>Insecta</taxon>
        <taxon>Pterygota</taxon>
        <taxon>Neoptera</taxon>
        <taxon>Endopterygota</taxon>
        <taxon>Diptera</taxon>
        <taxon>Brachycera</taxon>
        <taxon>Muscomorpha</taxon>
        <taxon>Ephydroidea</taxon>
        <taxon>Drosophilidae</taxon>
        <taxon>Drosophila</taxon>
        <taxon>Hawaiian Drosophila</taxon>
    </lineage>
</organism>
<comment type="function">
    <text evidence="1">Acts as a Ras effector and participates in MAPK pathway activation. Probably acts as a regulatory subunit of protein phosphatase that specifically dephosphorylates Raf kinase and stimulate Raf activity at specialized signaling complexes upon Ras activation (By similarity).</text>
</comment>
<comment type="similarity">
    <text evidence="3">Belongs to the SHOC2 family.</text>
</comment>
<protein>
    <recommendedName>
        <fullName>Leucine-rich repeat protein soc-2 homolog</fullName>
    </recommendedName>
    <alternativeName>
        <fullName>Protein Sur-8 homolog</fullName>
    </alternativeName>
    <alternativeName>
        <fullName>Protein soc-2 homolog</fullName>
    </alternativeName>
</protein>
<name>SUR8_DROGR</name>
<gene>
    <name type="primary">Sur-8</name>
    <name type="ORF">GH17496</name>
</gene>
<accession>B4JTV9</accession>
<evidence type="ECO:0000250" key="1"/>
<evidence type="ECO:0000256" key="2">
    <source>
        <dbReference type="SAM" id="MobiDB-lite"/>
    </source>
</evidence>
<evidence type="ECO:0000305" key="3"/>
<feature type="chain" id="PRO_0000385636" description="Leucine-rich repeat protein soc-2 homolog">
    <location>
        <begin position="1"/>
        <end position="622"/>
    </location>
</feature>
<feature type="repeat" description="LRR 1">
    <location>
        <begin position="142"/>
        <end position="163"/>
    </location>
</feature>
<feature type="repeat" description="LRR 2">
    <location>
        <begin position="165"/>
        <end position="186"/>
    </location>
</feature>
<feature type="repeat" description="LRR 3">
    <location>
        <begin position="188"/>
        <end position="209"/>
    </location>
</feature>
<feature type="repeat" description="LRR 4">
    <location>
        <begin position="211"/>
        <end position="232"/>
    </location>
</feature>
<feature type="repeat" description="LRR 5">
    <location>
        <begin position="234"/>
        <end position="255"/>
    </location>
</feature>
<feature type="repeat" description="LRR 6">
    <location>
        <begin position="257"/>
        <end position="278"/>
    </location>
</feature>
<feature type="repeat" description="LRR 7">
    <location>
        <begin position="280"/>
        <end position="301"/>
    </location>
</feature>
<feature type="repeat" description="LRR 8">
    <location>
        <begin position="303"/>
        <end position="324"/>
    </location>
</feature>
<feature type="repeat" description="LRR 9">
    <location>
        <begin position="326"/>
        <end position="348"/>
    </location>
</feature>
<feature type="repeat" description="LRR 10">
    <location>
        <begin position="349"/>
        <end position="370"/>
    </location>
</feature>
<feature type="repeat" description="LRR 11">
    <location>
        <begin position="373"/>
        <end position="394"/>
    </location>
</feature>
<feature type="repeat" description="LRR 12">
    <location>
        <begin position="397"/>
        <end position="418"/>
    </location>
</feature>
<feature type="repeat" description="LRR 13">
    <location>
        <begin position="421"/>
        <end position="442"/>
    </location>
</feature>
<feature type="repeat" description="LRR 14">
    <location>
        <begin position="444"/>
        <end position="465"/>
    </location>
</feature>
<feature type="repeat" description="LRR 15">
    <location>
        <begin position="467"/>
        <end position="488"/>
    </location>
</feature>
<feature type="repeat" description="LRR 16">
    <location>
        <begin position="490"/>
        <end position="511"/>
    </location>
</feature>
<feature type="repeat" description="LRR 17">
    <location>
        <begin position="513"/>
        <end position="534"/>
    </location>
</feature>
<feature type="repeat" description="LRR 18">
    <location>
        <begin position="536"/>
        <end position="557"/>
    </location>
</feature>
<feature type="repeat" description="LRR 19">
    <location>
        <begin position="559"/>
        <end position="581"/>
    </location>
</feature>
<feature type="repeat" description="LRR 20">
    <location>
        <begin position="583"/>
        <end position="604"/>
    </location>
</feature>
<feature type="region of interest" description="Disordered" evidence="2">
    <location>
        <begin position="1"/>
        <end position="117"/>
    </location>
</feature>
<feature type="compositionally biased region" description="Polar residues" evidence="2">
    <location>
        <begin position="1"/>
        <end position="30"/>
    </location>
</feature>
<feature type="compositionally biased region" description="Gly residues" evidence="2">
    <location>
        <begin position="36"/>
        <end position="52"/>
    </location>
</feature>
<feature type="compositionally biased region" description="Gly residues" evidence="2">
    <location>
        <begin position="64"/>
        <end position="75"/>
    </location>
</feature>
<feature type="compositionally biased region" description="Polar residues" evidence="2">
    <location>
        <begin position="85"/>
        <end position="94"/>
    </location>
</feature>
<keyword id="KW-0433">Leucine-rich repeat</keyword>
<keyword id="KW-1185">Reference proteome</keyword>
<keyword id="KW-0677">Repeat</keyword>